<reference key="1">
    <citation type="journal article" date="2001" name="Science">
        <title>Comparative genomics of Listeria species.</title>
        <authorList>
            <person name="Glaser P."/>
            <person name="Frangeul L."/>
            <person name="Buchrieser C."/>
            <person name="Rusniok C."/>
            <person name="Amend A."/>
            <person name="Baquero F."/>
            <person name="Berche P."/>
            <person name="Bloecker H."/>
            <person name="Brandt P."/>
            <person name="Chakraborty T."/>
            <person name="Charbit A."/>
            <person name="Chetouani F."/>
            <person name="Couve E."/>
            <person name="de Daruvar A."/>
            <person name="Dehoux P."/>
            <person name="Domann E."/>
            <person name="Dominguez-Bernal G."/>
            <person name="Duchaud E."/>
            <person name="Durant L."/>
            <person name="Dussurget O."/>
            <person name="Entian K.-D."/>
            <person name="Fsihi H."/>
            <person name="Garcia-del Portillo F."/>
            <person name="Garrido P."/>
            <person name="Gautier L."/>
            <person name="Goebel W."/>
            <person name="Gomez-Lopez N."/>
            <person name="Hain T."/>
            <person name="Hauf J."/>
            <person name="Jackson D."/>
            <person name="Jones L.-M."/>
            <person name="Kaerst U."/>
            <person name="Kreft J."/>
            <person name="Kuhn M."/>
            <person name="Kunst F."/>
            <person name="Kurapkat G."/>
            <person name="Madueno E."/>
            <person name="Maitournam A."/>
            <person name="Mata Vicente J."/>
            <person name="Ng E."/>
            <person name="Nedjari H."/>
            <person name="Nordsiek G."/>
            <person name="Novella S."/>
            <person name="de Pablos B."/>
            <person name="Perez-Diaz J.-C."/>
            <person name="Purcell R."/>
            <person name="Remmel B."/>
            <person name="Rose M."/>
            <person name="Schlueter T."/>
            <person name="Simoes N."/>
            <person name="Tierrez A."/>
            <person name="Vazquez-Boland J.-A."/>
            <person name="Voss H."/>
            <person name="Wehland J."/>
            <person name="Cossart P."/>
        </authorList>
    </citation>
    <scope>NUCLEOTIDE SEQUENCE [LARGE SCALE GENOMIC DNA]</scope>
    <source>
        <strain>ATCC BAA-680 / CLIP 11262</strain>
    </source>
</reference>
<evidence type="ECO:0000250" key="1"/>
<evidence type="ECO:0000255" key="2"/>
<evidence type="ECO:0000305" key="3"/>
<name>PRSA1_LISIN</name>
<gene>
    <name type="primary">prsA1</name>
    <name type="ordered locus">lin1482</name>
</gene>
<comment type="function">
    <text evidence="1">Plays a major role in protein secretion by helping the post-translocational extracellular folding of several secreted proteins.</text>
</comment>
<comment type="catalytic activity">
    <reaction>
        <text>[protein]-peptidylproline (omega=180) = [protein]-peptidylproline (omega=0)</text>
        <dbReference type="Rhea" id="RHEA:16237"/>
        <dbReference type="Rhea" id="RHEA-COMP:10747"/>
        <dbReference type="Rhea" id="RHEA-COMP:10748"/>
        <dbReference type="ChEBI" id="CHEBI:83833"/>
        <dbReference type="ChEBI" id="CHEBI:83834"/>
        <dbReference type="EC" id="5.2.1.8"/>
    </reaction>
</comment>
<comment type="subcellular location">
    <subcellularLocation>
        <location evidence="3">Cell membrane</location>
        <topology evidence="3">Lipid-anchor</topology>
    </subcellularLocation>
</comment>
<comment type="similarity">
    <text evidence="3">Belongs to the PrsA family.</text>
</comment>
<keyword id="KW-1003">Cell membrane</keyword>
<keyword id="KW-0413">Isomerase</keyword>
<keyword id="KW-0449">Lipoprotein</keyword>
<keyword id="KW-0472">Membrane</keyword>
<keyword id="KW-0564">Palmitate</keyword>
<keyword id="KW-0697">Rotamase</keyword>
<keyword id="KW-0732">Signal</keyword>
<proteinExistence type="inferred from homology"/>
<dbReference type="EC" id="5.2.1.8"/>
<dbReference type="EMBL" id="AL596168">
    <property type="protein sequence ID" value="CAC96713.1"/>
    <property type="molecule type" value="Genomic_DNA"/>
</dbReference>
<dbReference type="PIR" id="AI1617">
    <property type="entry name" value="AI1617"/>
</dbReference>
<dbReference type="RefSeq" id="WP_010991555.1">
    <property type="nucleotide sequence ID" value="NC_003212.1"/>
</dbReference>
<dbReference type="SMR" id="Q92BR2"/>
<dbReference type="STRING" id="272626.gene:17565813"/>
<dbReference type="KEGG" id="lin:lin1482"/>
<dbReference type="eggNOG" id="COG0760">
    <property type="taxonomic scope" value="Bacteria"/>
</dbReference>
<dbReference type="HOGENOM" id="CLU_034646_6_1_9"/>
<dbReference type="OrthoDB" id="14196at2"/>
<dbReference type="Proteomes" id="UP000002513">
    <property type="component" value="Chromosome"/>
</dbReference>
<dbReference type="GO" id="GO:0005886">
    <property type="term" value="C:plasma membrane"/>
    <property type="evidence" value="ECO:0007669"/>
    <property type="project" value="UniProtKB-SubCell"/>
</dbReference>
<dbReference type="GO" id="GO:0003755">
    <property type="term" value="F:peptidyl-prolyl cis-trans isomerase activity"/>
    <property type="evidence" value="ECO:0007669"/>
    <property type="project" value="UniProtKB-UniRule"/>
</dbReference>
<dbReference type="GO" id="GO:0006457">
    <property type="term" value="P:protein folding"/>
    <property type="evidence" value="ECO:0007669"/>
    <property type="project" value="UniProtKB-UniRule"/>
</dbReference>
<dbReference type="GO" id="GO:0015031">
    <property type="term" value="P:protein transport"/>
    <property type="evidence" value="ECO:0007669"/>
    <property type="project" value="InterPro"/>
</dbReference>
<dbReference type="FunFam" id="3.10.50.40:FF:000042">
    <property type="entry name" value="Foldase protein PrsA"/>
    <property type="match status" value="1"/>
</dbReference>
<dbReference type="Gene3D" id="3.10.50.40">
    <property type="match status" value="1"/>
</dbReference>
<dbReference type="Gene3D" id="1.10.3120.10">
    <property type="entry name" value="Trigger factor, C-terminal domain"/>
    <property type="match status" value="1"/>
</dbReference>
<dbReference type="HAMAP" id="MF_01145">
    <property type="entry name" value="Foldase_PrsA"/>
    <property type="match status" value="1"/>
</dbReference>
<dbReference type="InterPro" id="IPR023059">
    <property type="entry name" value="Foldase_PrsA"/>
</dbReference>
<dbReference type="InterPro" id="IPR046357">
    <property type="entry name" value="PPIase_dom_sf"/>
</dbReference>
<dbReference type="InterPro" id="IPR000297">
    <property type="entry name" value="PPIase_PpiC"/>
</dbReference>
<dbReference type="InterPro" id="IPR050245">
    <property type="entry name" value="PrsA_foldase"/>
</dbReference>
<dbReference type="InterPro" id="IPR037041">
    <property type="entry name" value="Trigger_fac_C_sf"/>
</dbReference>
<dbReference type="InterPro" id="IPR027304">
    <property type="entry name" value="Trigger_fact/SurA_dom_sf"/>
</dbReference>
<dbReference type="PANTHER" id="PTHR47245:SF1">
    <property type="entry name" value="FOLDASE PROTEIN PRSA"/>
    <property type="match status" value="1"/>
</dbReference>
<dbReference type="PANTHER" id="PTHR47245">
    <property type="entry name" value="PEPTIDYLPROLYL ISOMERASE"/>
    <property type="match status" value="1"/>
</dbReference>
<dbReference type="Pfam" id="PF13616">
    <property type="entry name" value="Rotamase_3"/>
    <property type="match status" value="1"/>
</dbReference>
<dbReference type="SUPFAM" id="SSF54534">
    <property type="entry name" value="FKBP-like"/>
    <property type="match status" value="1"/>
</dbReference>
<dbReference type="SUPFAM" id="SSF109998">
    <property type="entry name" value="Triger factor/SurA peptide-binding domain-like"/>
    <property type="match status" value="1"/>
</dbReference>
<dbReference type="PROSITE" id="PS50198">
    <property type="entry name" value="PPIC_PPIASE_2"/>
    <property type="match status" value="1"/>
</dbReference>
<dbReference type="PROSITE" id="PS51257">
    <property type="entry name" value="PROKAR_LIPOPROTEIN"/>
    <property type="match status" value="1"/>
</dbReference>
<protein>
    <recommendedName>
        <fullName>Foldase protein PrsA 1</fullName>
        <ecNumber>5.2.1.8</ecNumber>
    </recommendedName>
</protein>
<feature type="signal peptide" evidence="2">
    <location>
        <begin position="1"/>
        <end position="21"/>
    </location>
</feature>
<feature type="chain" id="PRO_0000029309" description="Foldase protein PrsA 1">
    <location>
        <begin position="22"/>
        <end position="294"/>
    </location>
</feature>
<feature type="domain" description="PpiC">
    <location>
        <begin position="135"/>
        <end position="226"/>
    </location>
</feature>
<feature type="lipid moiety-binding region" description="N-palmitoyl cysteine" evidence="2">
    <location>
        <position position="22"/>
    </location>
</feature>
<feature type="lipid moiety-binding region" description="S-diacylglycerol cysteine" evidence="2">
    <location>
        <position position="22"/>
    </location>
</feature>
<organism>
    <name type="scientific">Listeria innocua serovar 6a (strain ATCC BAA-680 / CLIP 11262)</name>
    <dbReference type="NCBI Taxonomy" id="272626"/>
    <lineage>
        <taxon>Bacteria</taxon>
        <taxon>Bacillati</taxon>
        <taxon>Bacillota</taxon>
        <taxon>Bacilli</taxon>
        <taxon>Bacillales</taxon>
        <taxon>Listeriaceae</taxon>
        <taxon>Listeria</taxon>
    </lineage>
</organism>
<accession>Q92BR2</accession>
<sequence>MTKLKKVMISLVAATLLLLAGCGSSAVVKTDAGNVTQDELYEAMKTTYGNEVVQQLTFKKILEDKYTVTEKEVNAEYKKYEEQYGDSFESTLSSNNLTKTSFKENLEYNLLVQKATEANMNVSESKLKTYYKTWEPNITVRHILVDDEATAKEIQTKLKNGEKFADLAKEYSTDTATSTNGGLLDPFGPGEMDETFEKAAYALKNKDDVSGIVKSTYGYHLIQLVKKTEKGTYAKEKANVKAAYIKSQLTSENMTAALKKELKAANIDIKDSDLKDAFADYTSTSSSSSTSTSN</sequence>